<comment type="cofactor">
    <cofactor evidence="1">
        <name>Zn(2+)</name>
        <dbReference type="ChEBI" id="CHEBI:29105"/>
    </cofactor>
    <text evidence="1">Binds 1 zinc ion per subunit.</text>
</comment>
<comment type="similarity">
    <text evidence="3">Belongs to the peptidase M3 family.</text>
</comment>
<gene>
    <name type="ORF">DDB_G0292362</name>
</gene>
<accession>Q54DD2</accession>
<name>THOPL_DICDI</name>
<protein>
    <recommendedName>
        <fullName>Thimet-like oligopeptidase</fullName>
        <ecNumber>3.4.24.-</ecNumber>
    </recommendedName>
</protein>
<evidence type="ECO:0000250" key="1"/>
<evidence type="ECO:0000255" key="2">
    <source>
        <dbReference type="PROSITE-ProRule" id="PRU10095"/>
    </source>
</evidence>
<evidence type="ECO:0000305" key="3"/>
<sequence length="673" mass="77499">MEELIKLNFPKSVEEYKKQSEELMETYDKGLKEIIEIPKEKRTFANTFEATDKLDVKFRNIESSLTFLANASTDEKVRDVANEVEATLSKYSIATSMREDLYQAYVDCCKQNNDFKESDLSKEQLRYVSKTLEGFEKNGLQLPKEKREKLKEIMTKISDNSIKFSKNIADDKTKLSFSMEQLNGIPKETIESFEKDESKPGNYFISLKYPDVIPTMKYCTVAETRKAVEFANGSKCIKENTPILEETCKLRFEAAQLLGFKDWASYKSNYLMVKSNDNIQSFEERMRKLLTPHAVTEYDRLKQLKKKIYLEKGGNPETYDDHYYSYDNAFYNNVMLVQDYQVDNNLVKEYFPFEVVIKGIFNCYQELLNVKFTEVPAYQPWHEEVKMYSCVDTADSNKLLGHFYIDLFPREGKYSHAAVWPLIPGYERADGEKQYPVAAMLCNFTKPTPTTPSLLTHDEVVTFFHEFGHVMHNMSTKVHYSMFSGTSVERDFVECPSQLFEFWCWNKDVLVNKLSGHYKDHSKKLPTDLVERMIAAKNLNVAIFYLRQIQLALFDNAIHSGNPANFTNTADLYHRIATDVALNPNQKGTNPGCSFGHLLGGYDAQYYSYLYSECFSASIFEIFDKHGVMNKELGARLRNQVLAVGGSQPSSETIENFLGSKPNEAAFLKTIGL</sequence>
<proteinExistence type="inferred from homology"/>
<organism>
    <name type="scientific">Dictyostelium discoideum</name>
    <name type="common">Social amoeba</name>
    <dbReference type="NCBI Taxonomy" id="44689"/>
    <lineage>
        <taxon>Eukaryota</taxon>
        <taxon>Amoebozoa</taxon>
        <taxon>Evosea</taxon>
        <taxon>Eumycetozoa</taxon>
        <taxon>Dictyostelia</taxon>
        <taxon>Dictyosteliales</taxon>
        <taxon>Dictyosteliaceae</taxon>
        <taxon>Dictyostelium</taxon>
    </lineage>
</organism>
<dbReference type="EC" id="3.4.24.-"/>
<dbReference type="EMBL" id="AAFI02000189">
    <property type="protein sequence ID" value="EAL61305.1"/>
    <property type="molecule type" value="Genomic_DNA"/>
</dbReference>
<dbReference type="RefSeq" id="XP_629709.1">
    <property type="nucleotide sequence ID" value="XM_629707.1"/>
</dbReference>
<dbReference type="SMR" id="Q54DD2"/>
<dbReference type="FunCoup" id="Q54DD2">
    <property type="interactions" value="461"/>
</dbReference>
<dbReference type="STRING" id="44689.Q54DD2"/>
<dbReference type="MEROPS" id="M03.A07"/>
<dbReference type="PaxDb" id="44689-DDB0267057"/>
<dbReference type="EnsemblProtists" id="EAL61305">
    <property type="protein sequence ID" value="EAL61305"/>
    <property type="gene ID" value="DDB_G0292362"/>
</dbReference>
<dbReference type="GeneID" id="8628623"/>
<dbReference type="KEGG" id="ddi:DDB_G0292362"/>
<dbReference type="dictyBase" id="DDB_G0292362"/>
<dbReference type="VEuPathDB" id="AmoebaDB:DDB_G0292362"/>
<dbReference type="eggNOG" id="KOG2089">
    <property type="taxonomic scope" value="Eukaryota"/>
</dbReference>
<dbReference type="HOGENOM" id="CLU_001805_1_2_1"/>
<dbReference type="InParanoid" id="Q54DD2"/>
<dbReference type="OMA" id="KNFQSAM"/>
<dbReference type="PhylomeDB" id="Q54DD2"/>
<dbReference type="Reactome" id="R-DDI-983168">
    <property type="pathway name" value="Antigen processing: Ubiquitination &amp; Proteasome degradation"/>
</dbReference>
<dbReference type="PRO" id="PR:Q54DD2"/>
<dbReference type="Proteomes" id="UP000002195">
    <property type="component" value="Chromosome 6"/>
</dbReference>
<dbReference type="GO" id="GO:0046872">
    <property type="term" value="F:metal ion binding"/>
    <property type="evidence" value="ECO:0007669"/>
    <property type="project" value="UniProtKB-KW"/>
</dbReference>
<dbReference type="GO" id="GO:0004222">
    <property type="term" value="F:metalloendopeptidase activity"/>
    <property type="evidence" value="ECO:0000318"/>
    <property type="project" value="GO_Central"/>
</dbReference>
<dbReference type="GO" id="GO:0006518">
    <property type="term" value="P:peptide metabolic process"/>
    <property type="evidence" value="ECO:0000318"/>
    <property type="project" value="GO_Central"/>
</dbReference>
<dbReference type="GO" id="GO:0006508">
    <property type="term" value="P:proteolysis"/>
    <property type="evidence" value="ECO:0000318"/>
    <property type="project" value="GO_Central"/>
</dbReference>
<dbReference type="CDD" id="cd06455">
    <property type="entry name" value="M3A_TOP"/>
    <property type="match status" value="1"/>
</dbReference>
<dbReference type="FunFam" id="3.40.390.10:FF:000006">
    <property type="entry name" value="Thimet oligopeptidase 1"/>
    <property type="match status" value="1"/>
</dbReference>
<dbReference type="FunFam" id="1.20.1050.40:FF:000004">
    <property type="entry name" value="Thimet-like oligopeptidase"/>
    <property type="match status" value="1"/>
</dbReference>
<dbReference type="Gene3D" id="3.40.390.10">
    <property type="entry name" value="Collagenase (Catalytic Domain)"/>
    <property type="match status" value="1"/>
</dbReference>
<dbReference type="Gene3D" id="1.20.1050.40">
    <property type="entry name" value="Endopeptidase. Chain P, domain 1"/>
    <property type="match status" value="1"/>
</dbReference>
<dbReference type="Gene3D" id="1.10.1370.10">
    <property type="entry name" value="Neurolysin, domain 3"/>
    <property type="match status" value="1"/>
</dbReference>
<dbReference type="InterPro" id="IPR024079">
    <property type="entry name" value="MetalloPept_cat_dom_sf"/>
</dbReference>
<dbReference type="InterPro" id="IPR024077">
    <property type="entry name" value="Neurolysin/TOP_dom2"/>
</dbReference>
<dbReference type="InterPro" id="IPR024080">
    <property type="entry name" value="Neurolysin/TOP_N"/>
</dbReference>
<dbReference type="InterPro" id="IPR045090">
    <property type="entry name" value="Pept_M3A_M3B"/>
</dbReference>
<dbReference type="InterPro" id="IPR001567">
    <property type="entry name" value="Pept_M3A_M3B_dom"/>
</dbReference>
<dbReference type="PANTHER" id="PTHR11804">
    <property type="entry name" value="PROTEASE M3 THIMET OLIGOPEPTIDASE-RELATED"/>
    <property type="match status" value="1"/>
</dbReference>
<dbReference type="PANTHER" id="PTHR11804:SF84">
    <property type="entry name" value="SACCHAROLYSIN"/>
    <property type="match status" value="1"/>
</dbReference>
<dbReference type="Pfam" id="PF01432">
    <property type="entry name" value="Peptidase_M3"/>
    <property type="match status" value="1"/>
</dbReference>
<dbReference type="SUPFAM" id="SSF55486">
    <property type="entry name" value="Metalloproteases ('zincins'), catalytic domain"/>
    <property type="match status" value="1"/>
</dbReference>
<dbReference type="PROSITE" id="PS00142">
    <property type="entry name" value="ZINC_PROTEASE"/>
    <property type="match status" value="1"/>
</dbReference>
<keyword id="KW-0378">Hydrolase</keyword>
<keyword id="KW-0479">Metal-binding</keyword>
<keyword id="KW-0482">Metalloprotease</keyword>
<keyword id="KW-0645">Protease</keyword>
<keyword id="KW-1185">Reference proteome</keyword>
<keyword id="KW-0862">Zinc</keyword>
<feature type="chain" id="PRO_0000327864" description="Thimet-like oligopeptidase">
    <location>
        <begin position="1"/>
        <end position="673"/>
    </location>
</feature>
<feature type="active site" evidence="2">
    <location>
        <position position="466"/>
    </location>
</feature>
<feature type="binding site" evidence="1">
    <location>
        <position position="465"/>
    </location>
    <ligand>
        <name>Zn(2+)</name>
        <dbReference type="ChEBI" id="CHEBI:29105"/>
    </ligand>
</feature>
<feature type="binding site" evidence="1">
    <location>
        <position position="469"/>
    </location>
    <ligand>
        <name>Zn(2+)</name>
        <dbReference type="ChEBI" id="CHEBI:29105"/>
    </ligand>
</feature>
<feature type="binding site" evidence="1">
    <location>
        <position position="472"/>
    </location>
    <ligand>
        <name>Zn(2+)</name>
        <dbReference type="ChEBI" id="CHEBI:29105"/>
    </ligand>
</feature>
<reference key="1">
    <citation type="journal article" date="2005" name="Nature">
        <title>The genome of the social amoeba Dictyostelium discoideum.</title>
        <authorList>
            <person name="Eichinger L."/>
            <person name="Pachebat J.A."/>
            <person name="Gloeckner G."/>
            <person name="Rajandream M.A."/>
            <person name="Sucgang R."/>
            <person name="Berriman M."/>
            <person name="Song J."/>
            <person name="Olsen R."/>
            <person name="Szafranski K."/>
            <person name="Xu Q."/>
            <person name="Tunggal B."/>
            <person name="Kummerfeld S."/>
            <person name="Madera M."/>
            <person name="Konfortov B.A."/>
            <person name="Rivero F."/>
            <person name="Bankier A.T."/>
            <person name="Lehmann R."/>
            <person name="Hamlin N."/>
            <person name="Davies R."/>
            <person name="Gaudet P."/>
            <person name="Fey P."/>
            <person name="Pilcher K."/>
            <person name="Chen G."/>
            <person name="Saunders D."/>
            <person name="Sodergren E.J."/>
            <person name="Davis P."/>
            <person name="Kerhornou A."/>
            <person name="Nie X."/>
            <person name="Hall N."/>
            <person name="Anjard C."/>
            <person name="Hemphill L."/>
            <person name="Bason N."/>
            <person name="Farbrother P."/>
            <person name="Desany B."/>
            <person name="Just E."/>
            <person name="Morio T."/>
            <person name="Rost R."/>
            <person name="Churcher C.M."/>
            <person name="Cooper J."/>
            <person name="Haydock S."/>
            <person name="van Driessche N."/>
            <person name="Cronin A."/>
            <person name="Goodhead I."/>
            <person name="Muzny D.M."/>
            <person name="Mourier T."/>
            <person name="Pain A."/>
            <person name="Lu M."/>
            <person name="Harper D."/>
            <person name="Lindsay R."/>
            <person name="Hauser H."/>
            <person name="James K.D."/>
            <person name="Quiles M."/>
            <person name="Madan Babu M."/>
            <person name="Saito T."/>
            <person name="Buchrieser C."/>
            <person name="Wardroper A."/>
            <person name="Felder M."/>
            <person name="Thangavelu M."/>
            <person name="Johnson D."/>
            <person name="Knights A."/>
            <person name="Loulseged H."/>
            <person name="Mungall K.L."/>
            <person name="Oliver K."/>
            <person name="Price C."/>
            <person name="Quail M.A."/>
            <person name="Urushihara H."/>
            <person name="Hernandez J."/>
            <person name="Rabbinowitsch E."/>
            <person name="Steffen D."/>
            <person name="Sanders M."/>
            <person name="Ma J."/>
            <person name="Kohara Y."/>
            <person name="Sharp S."/>
            <person name="Simmonds M.N."/>
            <person name="Spiegler S."/>
            <person name="Tivey A."/>
            <person name="Sugano S."/>
            <person name="White B."/>
            <person name="Walker D."/>
            <person name="Woodward J.R."/>
            <person name="Winckler T."/>
            <person name="Tanaka Y."/>
            <person name="Shaulsky G."/>
            <person name="Schleicher M."/>
            <person name="Weinstock G.M."/>
            <person name="Rosenthal A."/>
            <person name="Cox E.C."/>
            <person name="Chisholm R.L."/>
            <person name="Gibbs R.A."/>
            <person name="Loomis W.F."/>
            <person name="Platzer M."/>
            <person name="Kay R.R."/>
            <person name="Williams J.G."/>
            <person name="Dear P.H."/>
            <person name="Noegel A.A."/>
            <person name="Barrell B.G."/>
            <person name="Kuspa A."/>
        </authorList>
    </citation>
    <scope>NUCLEOTIDE SEQUENCE [LARGE SCALE GENOMIC DNA]</scope>
    <source>
        <strain>AX4</strain>
    </source>
</reference>